<reference key="1">
    <citation type="journal article" date="2007" name="PLoS Genet.">
        <title>Patterns and implications of gene gain and loss in the evolution of Prochlorococcus.</title>
        <authorList>
            <person name="Kettler G.C."/>
            <person name="Martiny A.C."/>
            <person name="Huang K."/>
            <person name="Zucker J."/>
            <person name="Coleman M.L."/>
            <person name="Rodrigue S."/>
            <person name="Chen F."/>
            <person name="Lapidus A."/>
            <person name="Ferriera S."/>
            <person name="Johnson J."/>
            <person name="Steglich C."/>
            <person name="Church G.M."/>
            <person name="Richardson P."/>
            <person name="Chisholm S.W."/>
        </authorList>
    </citation>
    <scope>NUCLEOTIDE SEQUENCE [LARGE SCALE GENOMIC DNA]</scope>
    <source>
        <strain>AS9601</strain>
    </source>
</reference>
<proteinExistence type="inferred from homology"/>
<organism>
    <name type="scientific">Prochlorococcus marinus (strain AS9601)</name>
    <dbReference type="NCBI Taxonomy" id="146891"/>
    <lineage>
        <taxon>Bacteria</taxon>
        <taxon>Bacillati</taxon>
        <taxon>Cyanobacteriota</taxon>
        <taxon>Cyanophyceae</taxon>
        <taxon>Synechococcales</taxon>
        <taxon>Prochlorococcaceae</taxon>
        <taxon>Prochlorococcus</taxon>
    </lineage>
</organism>
<feature type="chain" id="PRO_0000362375" description="ATP synthase subunit a">
    <location>
        <begin position="1"/>
        <end position="241"/>
    </location>
</feature>
<feature type="transmembrane region" description="Helical" evidence="1">
    <location>
        <begin position="30"/>
        <end position="50"/>
    </location>
</feature>
<feature type="transmembrane region" description="Helical" evidence="1">
    <location>
        <begin position="91"/>
        <end position="111"/>
    </location>
</feature>
<feature type="transmembrane region" description="Helical" evidence="1">
    <location>
        <begin position="128"/>
        <end position="148"/>
    </location>
</feature>
<feature type="transmembrane region" description="Helical" evidence="1">
    <location>
        <begin position="193"/>
        <end position="213"/>
    </location>
</feature>
<feature type="transmembrane region" description="Helical" evidence="1">
    <location>
        <begin position="214"/>
        <end position="234"/>
    </location>
</feature>
<comment type="function">
    <text evidence="1">Key component of the proton channel; it plays a direct role in the translocation of protons across the membrane.</text>
</comment>
<comment type="subunit">
    <text evidence="1">F-type ATPases have 2 components, CF(1) - the catalytic core - and CF(0) - the membrane proton channel. CF(1) has five subunits: alpha(3), beta(3), gamma(1), delta(1), epsilon(1). CF(0) has four main subunits: a, b, b' and c.</text>
</comment>
<comment type="subcellular location">
    <subcellularLocation>
        <location evidence="1">Cellular thylakoid membrane</location>
        <topology evidence="1">Multi-pass membrane protein</topology>
    </subcellularLocation>
</comment>
<comment type="similarity">
    <text evidence="1">Belongs to the ATPase A chain family.</text>
</comment>
<gene>
    <name evidence="1" type="primary">atpB</name>
    <name evidence="1" type="synonym">atpI</name>
    <name type="ordered locus">A9601_16581</name>
</gene>
<keyword id="KW-0066">ATP synthesis</keyword>
<keyword id="KW-0138">CF(0)</keyword>
<keyword id="KW-0375">Hydrogen ion transport</keyword>
<keyword id="KW-0406">Ion transport</keyword>
<keyword id="KW-0472">Membrane</keyword>
<keyword id="KW-0793">Thylakoid</keyword>
<keyword id="KW-0812">Transmembrane</keyword>
<keyword id="KW-1133">Transmembrane helix</keyword>
<keyword id="KW-0813">Transport</keyword>
<sequence length="241" mass="27374">MFFNSLLTNFAALEVGQHLYWQIGNIRLHGQVFLTSWILLGALLVFISFGTKKMENDPKGLQNLLEFLWDYIRDLARTQIGEKVYRDWMPFIGTLFLFVFVSNWGGALIPWRLIKLPSGELGAPTADINTTIALALLVSLSYFYAGLSNKGWRYFEYYVHPTPIMLPFKILEDFTKPLSLSFRLFGNILADELVVGVLVFLVPLILPIPVMFLGLFTSAIQALIFATLAAYYIGEAVEEHH</sequence>
<dbReference type="EMBL" id="CP000551">
    <property type="protein sequence ID" value="ABM70941.1"/>
    <property type="molecule type" value="Genomic_DNA"/>
</dbReference>
<dbReference type="RefSeq" id="WP_011819070.1">
    <property type="nucleotide sequence ID" value="NC_008816.1"/>
</dbReference>
<dbReference type="SMR" id="A2BT30"/>
<dbReference type="STRING" id="146891.A9601_16581"/>
<dbReference type="KEGG" id="pmb:A9601_16581"/>
<dbReference type="eggNOG" id="COG0356">
    <property type="taxonomic scope" value="Bacteria"/>
</dbReference>
<dbReference type="HOGENOM" id="CLU_041018_2_4_3"/>
<dbReference type="OrthoDB" id="9789241at2"/>
<dbReference type="Proteomes" id="UP000002590">
    <property type="component" value="Chromosome"/>
</dbReference>
<dbReference type="GO" id="GO:0031676">
    <property type="term" value="C:plasma membrane-derived thylakoid membrane"/>
    <property type="evidence" value="ECO:0007669"/>
    <property type="project" value="UniProtKB-SubCell"/>
</dbReference>
<dbReference type="GO" id="GO:0045259">
    <property type="term" value="C:proton-transporting ATP synthase complex"/>
    <property type="evidence" value="ECO:0007669"/>
    <property type="project" value="UniProtKB-KW"/>
</dbReference>
<dbReference type="GO" id="GO:0046933">
    <property type="term" value="F:proton-transporting ATP synthase activity, rotational mechanism"/>
    <property type="evidence" value="ECO:0007669"/>
    <property type="project" value="UniProtKB-UniRule"/>
</dbReference>
<dbReference type="CDD" id="cd00310">
    <property type="entry name" value="ATP-synt_Fo_a_6"/>
    <property type="match status" value="1"/>
</dbReference>
<dbReference type="FunFam" id="1.20.120.220:FF:000001">
    <property type="entry name" value="ATP synthase subunit a, chloroplastic"/>
    <property type="match status" value="1"/>
</dbReference>
<dbReference type="Gene3D" id="1.20.120.220">
    <property type="entry name" value="ATP synthase, F0 complex, subunit A"/>
    <property type="match status" value="1"/>
</dbReference>
<dbReference type="HAMAP" id="MF_01393">
    <property type="entry name" value="ATP_synth_a_bact"/>
    <property type="match status" value="1"/>
</dbReference>
<dbReference type="InterPro" id="IPR045082">
    <property type="entry name" value="ATP_syn_F0_a_bact/chloroplast"/>
</dbReference>
<dbReference type="InterPro" id="IPR000568">
    <property type="entry name" value="ATP_synth_F0_asu"/>
</dbReference>
<dbReference type="InterPro" id="IPR023011">
    <property type="entry name" value="ATP_synth_F0_asu_AS"/>
</dbReference>
<dbReference type="InterPro" id="IPR035908">
    <property type="entry name" value="F0_ATP_A_sf"/>
</dbReference>
<dbReference type="NCBIfam" id="TIGR01131">
    <property type="entry name" value="ATP_synt_6_or_A"/>
    <property type="match status" value="1"/>
</dbReference>
<dbReference type="PANTHER" id="PTHR42823">
    <property type="entry name" value="ATP SYNTHASE SUBUNIT A, CHLOROPLASTIC"/>
    <property type="match status" value="1"/>
</dbReference>
<dbReference type="PANTHER" id="PTHR42823:SF3">
    <property type="entry name" value="ATP SYNTHASE SUBUNIT A, CHLOROPLASTIC"/>
    <property type="match status" value="1"/>
</dbReference>
<dbReference type="Pfam" id="PF00119">
    <property type="entry name" value="ATP-synt_A"/>
    <property type="match status" value="1"/>
</dbReference>
<dbReference type="PRINTS" id="PR00123">
    <property type="entry name" value="ATPASEA"/>
</dbReference>
<dbReference type="SUPFAM" id="SSF81336">
    <property type="entry name" value="F1F0 ATP synthase subunit A"/>
    <property type="match status" value="1"/>
</dbReference>
<dbReference type="PROSITE" id="PS00449">
    <property type="entry name" value="ATPASE_A"/>
    <property type="match status" value="1"/>
</dbReference>
<name>ATP6_PROMS</name>
<protein>
    <recommendedName>
        <fullName evidence="1">ATP synthase subunit a</fullName>
    </recommendedName>
    <alternativeName>
        <fullName evidence="1">ATP synthase F0 sector subunit a</fullName>
    </alternativeName>
    <alternativeName>
        <fullName evidence="1">F-ATPase subunit 6</fullName>
    </alternativeName>
</protein>
<evidence type="ECO:0000255" key="1">
    <source>
        <dbReference type="HAMAP-Rule" id="MF_01393"/>
    </source>
</evidence>
<accession>A2BT30</accession>